<comment type="function">
    <text evidence="1">Probable SR-like splicing factor.</text>
</comment>
<comment type="tissue specificity">
    <text evidence="7">Expressed in leaves, inflorescence stems, roots, flower buds, open flowers and siliques.</text>
</comment>
<comment type="disruption phenotype">
    <text evidence="7">No photomorphogenic phenotype.</text>
</comment>
<comment type="sequence caution" evidence="8">
    <conflict type="erroneous gene model prediction">
        <sequence resource="EMBL-CDS" id="CAB96835"/>
    </conflict>
</comment>
<keyword id="KW-0507">mRNA processing</keyword>
<keyword id="KW-0508">mRNA splicing</keyword>
<keyword id="KW-1185">Reference proteome</keyword>
<keyword id="KW-0694">RNA-binding</keyword>
<gene>
    <name evidence="9" type="ordered locus">At5g10800</name>
    <name evidence="10" type="ORF">T30N20.70</name>
</gene>
<feature type="chain" id="PRO_0000436039" description="Protein RRC1-like">
    <location>
        <begin position="1"/>
        <end position="947"/>
    </location>
</feature>
<feature type="domain" description="RRM" evidence="2">
    <location>
        <begin position="187"/>
        <end position="268"/>
    </location>
</feature>
<feature type="repeat" description="SURP motif" evidence="4">
    <location>
        <begin position="336"/>
        <end position="379"/>
    </location>
</feature>
<feature type="domain" description="CID" evidence="5">
    <location>
        <begin position="444"/>
        <end position="589"/>
    </location>
</feature>
<feature type="domain" description="SAP" evidence="3">
    <location>
        <begin position="638"/>
        <end position="672"/>
    </location>
</feature>
<feature type="region of interest" description="Disordered" evidence="6">
    <location>
        <begin position="1"/>
        <end position="35"/>
    </location>
</feature>
<feature type="region of interest" description="Disordered" evidence="6">
    <location>
        <begin position="63"/>
        <end position="167"/>
    </location>
</feature>
<feature type="region of interest" description="Disordered" evidence="6">
    <location>
        <begin position="412"/>
        <end position="434"/>
    </location>
</feature>
<feature type="region of interest" description="Disordered" evidence="6">
    <location>
        <begin position="752"/>
        <end position="797"/>
    </location>
</feature>
<feature type="region of interest" description="Disordered" evidence="6">
    <location>
        <begin position="846"/>
        <end position="947"/>
    </location>
</feature>
<feature type="compositionally biased region" description="Basic and acidic residues" evidence="6">
    <location>
        <begin position="1"/>
        <end position="11"/>
    </location>
</feature>
<feature type="compositionally biased region" description="Basic residues" evidence="6">
    <location>
        <begin position="12"/>
        <end position="34"/>
    </location>
</feature>
<feature type="compositionally biased region" description="Basic and acidic residues" evidence="6">
    <location>
        <begin position="66"/>
        <end position="84"/>
    </location>
</feature>
<feature type="compositionally biased region" description="Basic and acidic residues" evidence="6">
    <location>
        <begin position="104"/>
        <end position="155"/>
    </location>
</feature>
<feature type="compositionally biased region" description="Basic and acidic residues" evidence="6">
    <location>
        <begin position="854"/>
        <end position="876"/>
    </location>
</feature>
<feature type="compositionally biased region" description="Basic and acidic residues" evidence="6">
    <location>
        <begin position="888"/>
        <end position="916"/>
    </location>
</feature>
<feature type="compositionally biased region" description="Basic and acidic residues" evidence="6">
    <location>
        <begin position="924"/>
        <end position="947"/>
    </location>
</feature>
<sequence>MVKDEFFLDHPGRKHRSRNTEKKKKPRRRERRMKQLVCIKSPWNRFKGIMLQLRLLLEVTINPNDNKLKPDSQGEKSRDGDSISKKGSRYVPSFLPPPLASKGKGPENKRDEERSKEMEKGKTRNIDHFVEELKREQEIRERRNQDRENSRDHNSDNTSSSRFDELPDYFDPSGRLGSLDDGDPQTTNLYVVNLSSKVDENFLLRTFGRFGPIASVKIMWPRTEEEKRRERHCGFVAFMNRADGEAAKEKMQGIIVYEYELKIGWGKVVFLPSQALPAPPPGHMAIRSKEGCNLIFSVTSGPPMNSVPNQNSELVLTPNVPDITVISPEDEHLKQIIDTMALNVLDGGCAFEQAIMERGRGNPLFNFLFELGSKEHTYYVWRLYSFAQGDTLQRWRTEPYIMIAGSGRWIPPPLPATRSPEHGKESRGTYAAGKSRCTEAEQTLTDSQRDEFEDMLRALTLERSQIREAMGFALDNAEAAGEVVEVLTESLTLKETSIPTKVARLMLVSDIIHNSSARVKNASAYRTKFEATLPDIMESFNDLYHSVHGRITAEALRERVLKVLQVWADWFLFSDAYINGLRATFLRSRNFGVTSFHSICGDAPDIEKKGLIGNMNDADKINQDAALAMGEGAARQELMNRPISELERRCRHNGLSLLGGREMMVARLVCLKDAEKQRGYEVVDENAKYRQGHSTWEEVNIEPKRMKTSYDKVETEEPVDLASTIPIPQPELKAFVKKEKIDLILPTSRWAREDDETDDEQKKSYSSGSDNAGGITFKTDEEDLKADPSVRVQPENEIDVEQRQKLRHIEIALIEYRESLEEQGMKNSEEIERKVAIHRKRLEADGLSGNQRVLPEKREKREDSRDSSRKRNRSESQNRSQSPPQKSLTRERVRDHDLDKDRHRDRDRQQHDLDKDRKRRAKSSSRERDDHDRSRERDRDWRRRGMR</sequence>
<protein>
    <recommendedName>
        <fullName evidence="8">Protein RRC1-like</fullName>
    </recommendedName>
    <alternativeName>
        <fullName evidence="8">Reduced red-light responses in CRY1CRY2 background 1-like protein</fullName>
    </alternativeName>
</protein>
<accession>F4KIA8</accession>
<accession>Q9LEV9</accession>
<dbReference type="EMBL" id="AL365234">
    <property type="protein sequence ID" value="CAB96835.1"/>
    <property type="status" value="ALT_SEQ"/>
    <property type="molecule type" value="Genomic_DNA"/>
</dbReference>
<dbReference type="EMBL" id="CP002688">
    <property type="protein sequence ID" value="AED91598.1"/>
    <property type="molecule type" value="Genomic_DNA"/>
</dbReference>
<dbReference type="PIR" id="T50789">
    <property type="entry name" value="T50789"/>
</dbReference>
<dbReference type="RefSeq" id="NP_196641.2">
    <property type="nucleotide sequence ID" value="NM_121118.5"/>
</dbReference>
<dbReference type="SMR" id="F4KIA8"/>
<dbReference type="FunCoup" id="F4KIA8">
    <property type="interactions" value="4107"/>
</dbReference>
<dbReference type="IntAct" id="F4KIA8">
    <property type="interactions" value="1"/>
</dbReference>
<dbReference type="STRING" id="3702.F4KIA8"/>
<dbReference type="iPTMnet" id="F4KIA8"/>
<dbReference type="PaxDb" id="3702-AT5G10800.1"/>
<dbReference type="EnsemblPlants" id="AT5G10800.1">
    <property type="protein sequence ID" value="AT5G10800.1"/>
    <property type="gene ID" value="AT5G10800"/>
</dbReference>
<dbReference type="GeneID" id="830947"/>
<dbReference type="Gramene" id="AT5G10800.1">
    <property type="protein sequence ID" value="AT5G10800.1"/>
    <property type="gene ID" value="AT5G10800"/>
</dbReference>
<dbReference type="KEGG" id="ath:AT5G10800"/>
<dbReference type="Araport" id="AT5G10800"/>
<dbReference type="TAIR" id="AT5G10800"/>
<dbReference type="eggNOG" id="KOG0151">
    <property type="taxonomic scope" value="Eukaryota"/>
</dbReference>
<dbReference type="HOGENOM" id="CLU_010743_2_0_1"/>
<dbReference type="InParanoid" id="F4KIA8"/>
<dbReference type="PRO" id="PR:F4KIA8"/>
<dbReference type="Proteomes" id="UP000006548">
    <property type="component" value="Chromosome 5"/>
</dbReference>
<dbReference type="ExpressionAtlas" id="F4KIA8">
    <property type="expression patterns" value="baseline and differential"/>
</dbReference>
<dbReference type="GO" id="GO:0005634">
    <property type="term" value="C:nucleus"/>
    <property type="evidence" value="ECO:0007669"/>
    <property type="project" value="UniProtKB-ARBA"/>
</dbReference>
<dbReference type="GO" id="GO:0003723">
    <property type="term" value="F:RNA binding"/>
    <property type="evidence" value="ECO:0007669"/>
    <property type="project" value="UniProtKB-KW"/>
</dbReference>
<dbReference type="GO" id="GO:0006397">
    <property type="term" value="P:mRNA processing"/>
    <property type="evidence" value="ECO:0007669"/>
    <property type="project" value="UniProtKB-KW"/>
</dbReference>
<dbReference type="GO" id="GO:0008380">
    <property type="term" value="P:RNA splicing"/>
    <property type="evidence" value="ECO:0007669"/>
    <property type="project" value="UniProtKB-KW"/>
</dbReference>
<dbReference type="CDD" id="cd21371">
    <property type="entry name" value="cwf21_RRC1-like"/>
    <property type="match status" value="1"/>
</dbReference>
<dbReference type="Gene3D" id="1.25.40.90">
    <property type="match status" value="1"/>
</dbReference>
<dbReference type="Gene3D" id="3.30.70.330">
    <property type="match status" value="1"/>
</dbReference>
<dbReference type="Gene3D" id="6.10.140.420">
    <property type="match status" value="1"/>
</dbReference>
<dbReference type="Gene3D" id="1.10.10.790">
    <property type="entry name" value="Surp module"/>
    <property type="match status" value="1"/>
</dbReference>
<dbReference type="InterPro" id="IPR006569">
    <property type="entry name" value="CID_dom"/>
</dbReference>
<dbReference type="InterPro" id="IPR008942">
    <property type="entry name" value="ENTH_VHS"/>
</dbReference>
<dbReference type="InterPro" id="IPR013170">
    <property type="entry name" value="mRNA_splic_Cwf21_dom"/>
</dbReference>
<dbReference type="InterPro" id="IPR012677">
    <property type="entry name" value="Nucleotide-bd_a/b_plait_sf"/>
</dbReference>
<dbReference type="InterPro" id="IPR035979">
    <property type="entry name" value="RBD_domain_sf"/>
</dbReference>
<dbReference type="InterPro" id="IPR047491">
    <property type="entry name" value="RRC1-like_cwf21"/>
</dbReference>
<dbReference type="InterPro" id="IPR000504">
    <property type="entry name" value="RRM_dom"/>
</dbReference>
<dbReference type="InterPro" id="IPR051485">
    <property type="entry name" value="SR-CTD_assoc_factor"/>
</dbReference>
<dbReference type="InterPro" id="IPR000061">
    <property type="entry name" value="Surp"/>
</dbReference>
<dbReference type="InterPro" id="IPR035967">
    <property type="entry name" value="SWAP/Surp_sf"/>
</dbReference>
<dbReference type="PANTHER" id="PTHR23140">
    <property type="entry name" value="RNA PROCESSING PROTEIN LD23810P"/>
    <property type="match status" value="1"/>
</dbReference>
<dbReference type="PANTHER" id="PTHR23140:SF0">
    <property type="entry name" value="U2 SNRNP-ASSOCIATED SURP MOTIF-CONTAINING PROTEIN"/>
    <property type="match status" value="1"/>
</dbReference>
<dbReference type="Pfam" id="PF04818">
    <property type="entry name" value="CID"/>
    <property type="match status" value="1"/>
</dbReference>
<dbReference type="Pfam" id="PF08312">
    <property type="entry name" value="cwf21"/>
    <property type="match status" value="1"/>
</dbReference>
<dbReference type="Pfam" id="PF00076">
    <property type="entry name" value="RRM_1"/>
    <property type="match status" value="1"/>
</dbReference>
<dbReference type="Pfam" id="PF01805">
    <property type="entry name" value="Surp"/>
    <property type="match status" value="1"/>
</dbReference>
<dbReference type="SMART" id="SM01115">
    <property type="entry name" value="cwf21"/>
    <property type="match status" value="1"/>
</dbReference>
<dbReference type="SMART" id="SM00582">
    <property type="entry name" value="RPR"/>
    <property type="match status" value="1"/>
</dbReference>
<dbReference type="SMART" id="SM00360">
    <property type="entry name" value="RRM"/>
    <property type="match status" value="1"/>
</dbReference>
<dbReference type="SMART" id="SM00648">
    <property type="entry name" value="SWAP"/>
    <property type="match status" value="1"/>
</dbReference>
<dbReference type="SUPFAM" id="SSF48464">
    <property type="entry name" value="ENTH/VHS domain"/>
    <property type="match status" value="1"/>
</dbReference>
<dbReference type="SUPFAM" id="SSF54928">
    <property type="entry name" value="RNA-binding domain, RBD"/>
    <property type="match status" value="1"/>
</dbReference>
<dbReference type="SUPFAM" id="SSF109905">
    <property type="entry name" value="Surp module (SWAP domain)"/>
    <property type="match status" value="1"/>
</dbReference>
<dbReference type="PROSITE" id="PS51391">
    <property type="entry name" value="CID"/>
    <property type="match status" value="1"/>
</dbReference>
<dbReference type="PROSITE" id="PS50102">
    <property type="entry name" value="RRM"/>
    <property type="match status" value="1"/>
</dbReference>
<dbReference type="PROSITE" id="PS50128">
    <property type="entry name" value="SURP"/>
    <property type="match status" value="1"/>
</dbReference>
<name>RRC1L_ARATH</name>
<organism evidence="11">
    <name type="scientific">Arabidopsis thaliana</name>
    <name type="common">Mouse-ear cress</name>
    <dbReference type="NCBI Taxonomy" id="3702"/>
    <lineage>
        <taxon>Eukaryota</taxon>
        <taxon>Viridiplantae</taxon>
        <taxon>Streptophyta</taxon>
        <taxon>Embryophyta</taxon>
        <taxon>Tracheophyta</taxon>
        <taxon>Spermatophyta</taxon>
        <taxon>Magnoliopsida</taxon>
        <taxon>eudicotyledons</taxon>
        <taxon>Gunneridae</taxon>
        <taxon>Pentapetalae</taxon>
        <taxon>rosids</taxon>
        <taxon>malvids</taxon>
        <taxon>Brassicales</taxon>
        <taxon>Brassicaceae</taxon>
        <taxon>Camelineae</taxon>
        <taxon>Arabidopsis</taxon>
    </lineage>
</organism>
<proteinExistence type="evidence at transcript level"/>
<reference key="1">
    <citation type="journal article" date="2000" name="Nature">
        <title>Sequence and analysis of chromosome 5 of the plant Arabidopsis thaliana.</title>
        <authorList>
            <person name="Tabata S."/>
            <person name="Kaneko T."/>
            <person name="Nakamura Y."/>
            <person name="Kotani H."/>
            <person name="Kato T."/>
            <person name="Asamizu E."/>
            <person name="Miyajima N."/>
            <person name="Sasamoto S."/>
            <person name="Kimura T."/>
            <person name="Hosouchi T."/>
            <person name="Kawashima K."/>
            <person name="Kohara M."/>
            <person name="Matsumoto M."/>
            <person name="Matsuno A."/>
            <person name="Muraki A."/>
            <person name="Nakayama S."/>
            <person name="Nakazaki N."/>
            <person name="Naruo K."/>
            <person name="Okumura S."/>
            <person name="Shinpo S."/>
            <person name="Takeuchi C."/>
            <person name="Wada T."/>
            <person name="Watanabe A."/>
            <person name="Yamada M."/>
            <person name="Yasuda M."/>
            <person name="Sato S."/>
            <person name="de la Bastide M."/>
            <person name="Huang E."/>
            <person name="Spiegel L."/>
            <person name="Gnoj L."/>
            <person name="O'Shaughnessy A."/>
            <person name="Preston R."/>
            <person name="Habermann K."/>
            <person name="Murray J."/>
            <person name="Johnson D."/>
            <person name="Rohlfing T."/>
            <person name="Nelson J."/>
            <person name="Stoneking T."/>
            <person name="Pepin K."/>
            <person name="Spieth J."/>
            <person name="Sekhon M."/>
            <person name="Armstrong J."/>
            <person name="Becker M."/>
            <person name="Belter E."/>
            <person name="Cordum H."/>
            <person name="Cordes M."/>
            <person name="Courtney L."/>
            <person name="Courtney W."/>
            <person name="Dante M."/>
            <person name="Du H."/>
            <person name="Edwards J."/>
            <person name="Fryman J."/>
            <person name="Haakensen B."/>
            <person name="Lamar E."/>
            <person name="Latreille P."/>
            <person name="Leonard S."/>
            <person name="Meyer R."/>
            <person name="Mulvaney E."/>
            <person name="Ozersky P."/>
            <person name="Riley A."/>
            <person name="Strowmatt C."/>
            <person name="Wagner-McPherson C."/>
            <person name="Wollam A."/>
            <person name="Yoakum M."/>
            <person name="Bell M."/>
            <person name="Dedhia N."/>
            <person name="Parnell L."/>
            <person name="Shah R."/>
            <person name="Rodriguez M."/>
            <person name="Hoon See L."/>
            <person name="Vil D."/>
            <person name="Baker J."/>
            <person name="Kirchoff K."/>
            <person name="Toth K."/>
            <person name="King L."/>
            <person name="Bahret A."/>
            <person name="Miller B."/>
            <person name="Marra M.A."/>
            <person name="Martienssen R."/>
            <person name="McCombie W.R."/>
            <person name="Wilson R.K."/>
            <person name="Murphy G."/>
            <person name="Bancroft I."/>
            <person name="Volckaert G."/>
            <person name="Wambutt R."/>
            <person name="Duesterhoeft A."/>
            <person name="Stiekema W."/>
            <person name="Pohl T."/>
            <person name="Entian K.-D."/>
            <person name="Terryn N."/>
            <person name="Hartley N."/>
            <person name="Bent E."/>
            <person name="Johnson S."/>
            <person name="Langham S.-A."/>
            <person name="McCullagh B."/>
            <person name="Robben J."/>
            <person name="Grymonprez B."/>
            <person name="Zimmermann W."/>
            <person name="Ramsperger U."/>
            <person name="Wedler H."/>
            <person name="Balke K."/>
            <person name="Wedler E."/>
            <person name="Peters S."/>
            <person name="van Staveren M."/>
            <person name="Dirkse W."/>
            <person name="Mooijman P."/>
            <person name="Klein Lankhorst R."/>
            <person name="Weitzenegger T."/>
            <person name="Bothe G."/>
            <person name="Rose M."/>
            <person name="Hauf J."/>
            <person name="Berneiser S."/>
            <person name="Hempel S."/>
            <person name="Feldpausch M."/>
            <person name="Lamberth S."/>
            <person name="Villarroel R."/>
            <person name="Gielen J."/>
            <person name="Ardiles W."/>
            <person name="Bents O."/>
            <person name="Lemcke K."/>
            <person name="Kolesov G."/>
            <person name="Mayer K.F.X."/>
            <person name="Rudd S."/>
            <person name="Schoof H."/>
            <person name="Schueller C."/>
            <person name="Zaccaria P."/>
            <person name="Mewes H.-W."/>
            <person name="Bevan M."/>
            <person name="Fransz P.F."/>
        </authorList>
    </citation>
    <scope>NUCLEOTIDE SEQUENCE [LARGE SCALE GENOMIC DNA]</scope>
    <source>
        <strain>cv. Columbia</strain>
    </source>
</reference>
<reference key="2">
    <citation type="journal article" date="2017" name="Plant J.">
        <title>Araport11: a complete reannotation of the Arabidopsis thaliana reference genome.</title>
        <authorList>
            <person name="Cheng C.Y."/>
            <person name="Krishnakumar V."/>
            <person name="Chan A.P."/>
            <person name="Thibaud-Nissen F."/>
            <person name="Schobel S."/>
            <person name="Town C.D."/>
        </authorList>
    </citation>
    <scope>GENOME REANNOTATION</scope>
    <source>
        <strain>cv. Columbia</strain>
    </source>
</reference>
<reference key="3">
    <citation type="journal article" date="2012" name="Plant J.">
        <title>The RS domain of Arabidopsis splicing factor RRC1 is required for phytochrome B signal transduction.</title>
        <authorList>
            <person name="Shikata H."/>
            <person name="Shibata M."/>
            <person name="Ushijima T."/>
            <person name="Nakashima M."/>
            <person name="Kong S.G."/>
            <person name="Matsuoka K."/>
            <person name="Lin C."/>
            <person name="Matsushita T."/>
        </authorList>
    </citation>
    <scope>TISSUE SPECIFICITY</scope>
    <scope>DISRUPTION PHENOTYPE</scope>
</reference>
<evidence type="ECO:0000250" key="1">
    <source>
        <dbReference type="UniProtKB" id="Q9C5J3"/>
    </source>
</evidence>
<evidence type="ECO:0000255" key="2">
    <source>
        <dbReference type="PROSITE-ProRule" id="PRU00176"/>
    </source>
</evidence>
<evidence type="ECO:0000255" key="3">
    <source>
        <dbReference type="PROSITE-ProRule" id="PRU00186"/>
    </source>
</evidence>
<evidence type="ECO:0000255" key="4">
    <source>
        <dbReference type="PROSITE-ProRule" id="PRU00263"/>
    </source>
</evidence>
<evidence type="ECO:0000255" key="5">
    <source>
        <dbReference type="PROSITE-ProRule" id="PRU00724"/>
    </source>
</evidence>
<evidence type="ECO:0000256" key="6">
    <source>
        <dbReference type="SAM" id="MobiDB-lite"/>
    </source>
</evidence>
<evidence type="ECO:0000269" key="7">
    <source>
    </source>
</evidence>
<evidence type="ECO:0000305" key="8"/>
<evidence type="ECO:0000312" key="9">
    <source>
        <dbReference type="Araport" id="AT5G10800"/>
    </source>
</evidence>
<evidence type="ECO:0000312" key="10">
    <source>
        <dbReference type="EMBL" id="CAB96835.1"/>
    </source>
</evidence>
<evidence type="ECO:0000312" key="11">
    <source>
        <dbReference type="Proteomes" id="UP000006548"/>
    </source>
</evidence>